<gene>
    <name type="primary">CTT-Y</name>
</gene>
<dbReference type="EMBL" id="X56271">
    <property type="protein sequence ID" value="CAA39720.1"/>
    <property type="molecule type" value="Genomic_DNA"/>
</dbReference>
<dbReference type="PIR" id="S04498">
    <property type="entry name" value="S04498"/>
</dbReference>
<dbReference type="SMR" id="P18968"/>
<dbReference type="GO" id="GO:0005576">
    <property type="term" value="C:extracellular region"/>
    <property type="evidence" value="ECO:0007669"/>
    <property type="project" value="InterPro"/>
</dbReference>
<dbReference type="GO" id="GO:0005833">
    <property type="term" value="C:hemoglobin complex"/>
    <property type="evidence" value="ECO:0007669"/>
    <property type="project" value="InterPro"/>
</dbReference>
<dbReference type="GO" id="GO:0020037">
    <property type="term" value="F:heme binding"/>
    <property type="evidence" value="ECO:0007669"/>
    <property type="project" value="InterPro"/>
</dbReference>
<dbReference type="GO" id="GO:0046872">
    <property type="term" value="F:metal ion binding"/>
    <property type="evidence" value="ECO:0007669"/>
    <property type="project" value="UniProtKB-KW"/>
</dbReference>
<dbReference type="GO" id="GO:0019825">
    <property type="term" value="F:oxygen binding"/>
    <property type="evidence" value="ECO:0007669"/>
    <property type="project" value="InterPro"/>
</dbReference>
<dbReference type="GO" id="GO:0005344">
    <property type="term" value="F:oxygen carrier activity"/>
    <property type="evidence" value="ECO:0007669"/>
    <property type="project" value="UniProtKB-KW"/>
</dbReference>
<dbReference type="CDD" id="cd01040">
    <property type="entry name" value="Mb-like"/>
    <property type="match status" value="1"/>
</dbReference>
<dbReference type="Gene3D" id="1.10.490.10">
    <property type="entry name" value="Globins"/>
    <property type="match status" value="1"/>
</dbReference>
<dbReference type="InterPro" id="IPR002336">
    <property type="entry name" value="Erythrocruorin"/>
</dbReference>
<dbReference type="InterPro" id="IPR000971">
    <property type="entry name" value="Globin"/>
</dbReference>
<dbReference type="InterPro" id="IPR009050">
    <property type="entry name" value="Globin-like_sf"/>
</dbReference>
<dbReference type="InterPro" id="IPR012292">
    <property type="entry name" value="Globin/Proto"/>
</dbReference>
<dbReference type="InterPro" id="IPR044399">
    <property type="entry name" value="Mb-like_M"/>
</dbReference>
<dbReference type="PANTHER" id="PTHR47217">
    <property type="entry name" value="GLOBIN-LIKE PROTEIN"/>
    <property type="match status" value="1"/>
</dbReference>
<dbReference type="PANTHER" id="PTHR47217:SF1">
    <property type="entry name" value="GLOBIN-LIKE PROTEIN"/>
    <property type="match status" value="1"/>
</dbReference>
<dbReference type="Pfam" id="PF00042">
    <property type="entry name" value="Globin"/>
    <property type="match status" value="1"/>
</dbReference>
<dbReference type="PRINTS" id="PR00611">
    <property type="entry name" value="ERYTHCRUORIN"/>
</dbReference>
<dbReference type="SUPFAM" id="SSF46458">
    <property type="entry name" value="Globin-like"/>
    <property type="match status" value="1"/>
</dbReference>
<dbReference type="PROSITE" id="PS01033">
    <property type="entry name" value="GLOBIN"/>
    <property type="match status" value="1"/>
</dbReference>
<keyword id="KW-0349">Heme</keyword>
<keyword id="KW-0408">Iron</keyword>
<keyword id="KW-0479">Metal-binding</keyword>
<keyword id="KW-0561">Oxygen transport</keyword>
<keyword id="KW-0732">Signal</keyword>
<keyword id="KW-0813">Transport</keyword>
<proteinExistence type="inferred from homology"/>
<organism>
    <name type="scientific">Chironomus thummi piger</name>
    <name type="common">Midge</name>
    <name type="synonym">Chironomus piger</name>
    <dbReference type="NCBI Taxonomy" id="7156"/>
    <lineage>
        <taxon>Eukaryota</taxon>
        <taxon>Metazoa</taxon>
        <taxon>Ecdysozoa</taxon>
        <taxon>Arthropoda</taxon>
        <taxon>Hexapoda</taxon>
        <taxon>Insecta</taxon>
        <taxon>Pterygota</taxon>
        <taxon>Neoptera</taxon>
        <taxon>Endopterygota</taxon>
        <taxon>Diptera</taxon>
        <taxon>Nematocera</taxon>
        <taxon>Chironomoidea</taxon>
        <taxon>Chironomidae</taxon>
        <taxon>Chironominae</taxon>
        <taxon>Chironomus</taxon>
    </lineage>
</organism>
<feature type="signal peptide">
    <location>
        <begin position="1"/>
        <end position="16"/>
    </location>
</feature>
<feature type="chain" id="PRO_0000011209" description="Globin CTT-Y">
    <location>
        <begin position="17"/>
        <end position="160"/>
    </location>
</feature>
<feature type="domain" description="Globin" evidence="1">
    <location>
        <begin position="17"/>
        <end position="160"/>
    </location>
</feature>
<feature type="binding site" description="distal binding residue" evidence="1">
    <location>
        <position position="74"/>
    </location>
    <ligand>
        <name>heme b</name>
        <dbReference type="ChEBI" id="CHEBI:60344"/>
    </ligand>
    <ligandPart>
        <name>Fe</name>
        <dbReference type="ChEBI" id="CHEBI:18248"/>
    </ligandPart>
</feature>
<feature type="binding site" description="proximal binding residue" evidence="1">
    <location>
        <position position="109"/>
    </location>
    <ligand>
        <name>heme b</name>
        <dbReference type="ChEBI" id="CHEBI:60344"/>
    </ligand>
    <ligandPart>
        <name>Fe</name>
        <dbReference type="ChEBI" id="CHEBI:18248"/>
    </ligandPart>
</feature>
<reference key="1">
    <citation type="journal article" date="1989" name="Biol. Chem. Hoppe-Seyler">
        <title>Structure of a hemoglobin gene cluster and nucleotide sequence of three hemoglobin genes from the midge Chironomus thummi piger (Diptera, Insecta).</title>
        <authorList>
            <person name="Rozynek P."/>
            <person name="Hankeln T."/>
            <person name="Schmidt E.R."/>
        </authorList>
    </citation>
    <scope>NUCLEOTIDE SEQUENCE [GENOMIC DNA]</scope>
</reference>
<reference key="2">
    <citation type="submission" date="1990-09" db="EMBL/GenBank/DDBJ databases">
        <authorList>
            <person name="Hankeln T."/>
            <person name="Rozynek P."/>
            <person name="Schmidt E.R."/>
            <person name="Broecker M."/>
        </authorList>
    </citation>
    <scope>NUCLEOTIDE SEQUENCE [GENOMIC DNA]</scope>
</reference>
<sequence length="160" mass="18150">MKVLAIFALCIIGALATPCDDFKIMQEAWNTMKNEEVEILYTVFKAYPDIQAKFPQFVGKDLETIKGTAEFAVHATRIVSFMTEVISLLGNPDNLPAIMSLLSKLGKDHKGRGITVKQFDEFHEAFHNFLHTHSVWNDNVDAAWHCNEKEIRKVINANLE</sequence>
<protein>
    <recommendedName>
        <fullName>Globin CTT-Y</fullName>
    </recommendedName>
    <alternativeName>
        <fullName>HBY</fullName>
    </alternativeName>
</protein>
<comment type="miscellaneous">
    <text>There are at least 12 different components in Midge globin.</text>
</comment>
<comment type="similarity">
    <text evidence="1">Belongs to the globin family.</text>
</comment>
<evidence type="ECO:0000255" key="1">
    <source>
        <dbReference type="PROSITE-ProRule" id="PRU00238"/>
    </source>
</evidence>
<name>GLBY_CHITP</name>
<accession>P18968</accession>